<evidence type="ECO:0000255" key="1">
    <source>
        <dbReference type="HAMAP-Rule" id="MF_00007"/>
    </source>
</evidence>
<evidence type="ECO:0000256" key="2">
    <source>
        <dbReference type="SAM" id="MobiDB-lite"/>
    </source>
</evidence>
<sequence length="452" mass="49904">MGALTISAKYLIELGFEVQGTVDKPDIIGALFSQTEGLLGSDLDLRELQNTSRIGRIEVEVEHRGDKTVGKVYVPSNLDHYETALIAAMLETVDRVGPYNAKFQVNSIKDLRSEKRKLIIDRAKELIKLIERETIPDTKELMDKFLGEVKQGEVVSYGPEGLPAGPDVESSDTVIIVEGRADVVNLIKHGYRNVIAIEGASGGIPKTVIELSRRKTTIAFTDGDRGGEMILRELLKVADIDYIARAPPGKEVEQLTAKEIAKALRNKIPVEEYINQLSKKDRQIIEESKKQIEQAQVQPSAAPTSPQPQPESTQPTQPIQQVQVTQQTQVIEVPAQTQGQVQVTTMQQSTQQTPQLPTSVVDEINKLSGTLEAIIYDKNWTVLKRVPVRDLLDTLQQVNDAYAIVFDGVGTQRLVDAAVGKGIKMLIMTRIGNIAKVPSDMVILTFNDIINK</sequence>
<dbReference type="EC" id="2.7.7.101" evidence="1"/>
<dbReference type="EMBL" id="CP000852">
    <property type="protein sequence ID" value="ABW01018.1"/>
    <property type="molecule type" value="Genomic_DNA"/>
</dbReference>
<dbReference type="RefSeq" id="WP_012185238.1">
    <property type="nucleotide sequence ID" value="NC_009954.1"/>
</dbReference>
<dbReference type="STRING" id="397948.Cmaq_0169"/>
<dbReference type="GeneID" id="5709737"/>
<dbReference type="KEGG" id="cma:Cmaq_0169"/>
<dbReference type="eggNOG" id="arCOG04281">
    <property type="taxonomic scope" value="Archaea"/>
</dbReference>
<dbReference type="HOGENOM" id="CLU_034626_0_0_2"/>
<dbReference type="OrthoDB" id="8643at2157"/>
<dbReference type="Proteomes" id="UP000001137">
    <property type="component" value="Chromosome"/>
</dbReference>
<dbReference type="GO" id="GO:0005737">
    <property type="term" value="C:cytoplasm"/>
    <property type="evidence" value="ECO:0007669"/>
    <property type="project" value="TreeGrafter"/>
</dbReference>
<dbReference type="GO" id="GO:0000428">
    <property type="term" value="C:DNA-directed RNA polymerase complex"/>
    <property type="evidence" value="ECO:0007669"/>
    <property type="project" value="UniProtKB-KW"/>
</dbReference>
<dbReference type="GO" id="GO:0000178">
    <property type="term" value="C:exosome (RNase complex)"/>
    <property type="evidence" value="ECO:0007669"/>
    <property type="project" value="UniProtKB-KW"/>
</dbReference>
<dbReference type="GO" id="GO:1990077">
    <property type="term" value="C:primosome complex"/>
    <property type="evidence" value="ECO:0007669"/>
    <property type="project" value="UniProtKB-KW"/>
</dbReference>
<dbReference type="GO" id="GO:0003899">
    <property type="term" value="F:DNA-directed RNA polymerase activity"/>
    <property type="evidence" value="ECO:0007669"/>
    <property type="project" value="InterPro"/>
</dbReference>
<dbReference type="GO" id="GO:0046872">
    <property type="term" value="F:metal ion binding"/>
    <property type="evidence" value="ECO:0007669"/>
    <property type="project" value="UniProtKB-KW"/>
</dbReference>
<dbReference type="GO" id="GO:0008143">
    <property type="term" value="F:poly(A) binding"/>
    <property type="evidence" value="ECO:0007669"/>
    <property type="project" value="InterPro"/>
</dbReference>
<dbReference type="GO" id="GO:0006269">
    <property type="term" value="P:DNA replication, synthesis of primer"/>
    <property type="evidence" value="ECO:0007669"/>
    <property type="project" value="UniProtKB-UniRule"/>
</dbReference>
<dbReference type="CDD" id="cd01029">
    <property type="entry name" value="TOPRIM_primases"/>
    <property type="match status" value="1"/>
</dbReference>
<dbReference type="FunFam" id="3.40.1360.10:FF:000010">
    <property type="entry name" value="DNA primase DnaG"/>
    <property type="match status" value="1"/>
</dbReference>
<dbReference type="Gene3D" id="3.40.1360.10">
    <property type="match status" value="1"/>
</dbReference>
<dbReference type="HAMAP" id="MF_00007">
    <property type="entry name" value="DNA_primase_DnaG_arc"/>
    <property type="match status" value="1"/>
</dbReference>
<dbReference type="InterPro" id="IPR050219">
    <property type="entry name" value="DnaG_primase"/>
</dbReference>
<dbReference type="InterPro" id="IPR020607">
    <property type="entry name" value="Primase_DnaG_arc"/>
</dbReference>
<dbReference type="InterPro" id="IPR034154">
    <property type="entry name" value="TOPRIM_DnaG/twinkle"/>
</dbReference>
<dbReference type="InterPro" id="IPR006171">
    <property type="entry name" value="TOPRIM_dom"/>
</dbReference>
<dbReference type="NCBIfam" id="NF003108">
    <property type="entry name" value="PRK04031.1-1"/>
    <property type="match status" value="1"/>
</dbReference>
<dbReference type="PANTHER" id="PTHR30313">
    <property type="entry name" value="DNA PRIMASE"/>
    <property type="match status" value="1"/>
</dbReference>
<dbReference type="PANTHER" id="PTHR30313:SF2">
    <property type="entry name" value="DNA PRIMASE"/>
    <property type="match status" value="1"/>
</dbReference>
<dbReference type="Pfam" id="PF13662">
    <property type="entry name" value="Toprim_4"/>
    <property type="match status" value="1"/>
</dbReference>
<dbReference type="SMART" id="SM00493">
    <property type="entry name" value="TOPRIM"/>
    <property type="match status" value="1"/>
</dbReference>
<dbReference type="SUPFAM" id="SSF56731">
    <property type="entry name" value="DNA primase core"/>
    <property type="match status" value="1"/>
</dbReference>
<dbReference type="PROSITE" id="PS50880">
    <property type="entry name" value="TOPRIM"/>
    <property type="match status" value="1"/>
</dbReference>
<comment type="function">
    <text evidence="1">RNA polymerase that catalyzes the synthesis of short RNA molecules used as primers for DNA polymerase during DNA replication. Also part of the exosome, which is a complex involved in RNA degradation. Acts as a poly(A)-binding protein that enhances the interaction between heteromeric, adenine-rich transcripts and the exosome.</text>
</comment>
<comment type="catalytic activity">
    <reaction evidence="1">
        <text>ssDNA + n NTP = ssDNA/pppN(pN)n-1 hybrid + (n-1) diphosphate.</text>
        <dbReference type="EC" id="2.7.7.101"/>
    </reaction>
</comment>
<comment type="cofactor">
    <cofactor evidence="1">
        <name>Mg(2+)</name>
        <dbReference type="ChEBI" id="CHEBI:18420"/>
    </cofactor>
    <text evidence="1">Binds two Mg(2+) per subunit.</text>
</comment>
<comment type="subunit">
    <text evidence="1">Forms a ternary complex with MCM helicase and DNA. Component of the archaeal exosome complex.</text>
</comment>
<comment type="similarity">
    <text evidence="1">Belongs to the archaeal DnaG primase family.</text>
</comment>
<name>DNAG_CALMQ</name>
<proteinExistence type="inferred from homology"/>
<keyword id="KW-0235">DNA replication</keyword>
<keyword id="KW-0240">DNA-directed RNA polymerase</keyword>
<keyword id="KW-0271">Exosome</keyword>
<keyword id="KW-0460">Magnesium</keyword>
<keyword id="KW-0479">Metal-binding</keyword>
<keyword id="KW-0548">Nucleotidyltransferase</keyword>
<keyword id="KW-0639">Primosome</keyword>
<keyword id="KW-1185">Reference proteome</keyword>
<keyword id="KW-0804">Transcription</keyword>
<keyword id="KW-0808">Transferase</keyword>
<reference key="1">
    <citation type="submission" date="2007-10" db="EMBL/GenBank/DDBJ databases">
        <title>Complete sequence of Caldivirga maquilingensis IC-167.</title>
        <authorList>
            <consortium name="US DOE Joint Genome Institute"/>
            <person name="Copeland A."/>
            <person name="Lucas S."/>
            <person name="Lapidus A."/>
            <person name="Barry K."/>
            <person name="Glavina del Rio T."/>
            <person name="Dalin E."/>
            <person name="Tice H."/>
            <person name="Pitluck S."/>
            <person name="Saunders E."/>
            <person name="Brettin T."/>
            <person name="Bruce D."/>
            <person name="Detter J.C."/>
            <person name="Han C."/>
            <person name="Schmutz J."/>
            <person name="Larimer F."/>
            <person name="Land M."/>
            <person name="Hauser L."/>
            <person name="Kyrpides N."/>
            <person name="Ivanova N."/>
            <person name="Biddle J.F."/>
            <person name="Zhang Z."/>
            <person name="Fitz-Gibbon S.T."/>
            <person name="Lowe T.M."/>
            <person name="Saltikov C."/>
            <person name="House C.H."/>
            <person name="Richardson P."/>
        </authorList>
    </citation>
    <scope>NUCLEOTIDE SEQUENCE [LARGE SCALE GENOMIC DNA]</scope>
    <source>
        <strain>ATCC 700844 / DSM 13496 / JCM 10307 / IC-167</strain>
    </source>
</reference>
<organism>
    <name type="scientific">Caldivirga maquilingensis (strain ATCC 700844 / DSM 13496 / JCM 10307 / IC-167)</name>
    <dbReference type="NCBI Taxonomy" id="397948"/>
    <lineage>
        <taxon>Archaea</taxon>
        <taxon>Thermoproteota</taxon>
        <taxon>Thermoprotei</taxon>
        <taxon>Thermoproteales</taxon>
        <taxon>Thermoproteaceae</taxon>
        <taxon>Caldivirga</taxon>
    </lineage>
</organism>
<feature type="chain" id="PRO_1000073865" description="DNA primase DnaG">
    <location>
        <begin position="1"/>
        <end position="452"/>
    </location>
</feature>
<feature type="domain" description="Toprim" evidence="1">
    <location>
        <begin position="172"/>
        <end position="248"/>
    </location>
</feature>
<feature type="region of interest" description="Disordered" evidence="2">
    <location>
        <begin position="289"/>
        <end position="320"/>
    </location>
</feature>
<feature type="compositionally biased region" description="Low complexity" evidence="2">
    <location>
        <begin position="294"/>
        <end position="320"/>
    </location>
</feature>
<feature type="binding site" evidence="1">
    <location>
        <position position="178"/>
    </location>
    <ligand>
        <name>Mg(2+)</name>
        <dbReference type="ChEBI" id="CHEBI:18420"/>
        <label>1</label>
        <note>catalytic</note>
    </ligand>
</feature>
<feature type="binding site" evidence="1">
    <location>
        <position position="222"/>
    </location>
    <ligand>
        <name>Mg(2+)</name>
        <dbReference type="ChEBI" id="CHEBI:18420"/>
        <label>1</label>
        <note>catalytic</note>
    </ligand>
</feature>
<feature type="binding site" evidence="1">
    <location>
        <position position="222"/>
    </location>
    <ligand>
        <name>Mg(2+)</name>
        <dbReference type="ChEBI" id="CHEBI:18420"/>
        <label>2</label>
    </ligand>
</feature>
<feature type="binding site" evidence="1">
    <location>
        <position position="224"/>
    </location>
    <ligand>
        <name>Mg(2+)</name>
        <dbReference type="ChEBI" id="CHEBI:18420"/>
        <label>2</label>
    </ligand>
</feature>
<gene>
    <name evidence="1" type="primary">dnaG</name>
    <name type="ordered locus">Cmaq_0169</name>
</gene>
<protein>
    <recommendedName>
        <fullName evidence="1">DNA primase DnaG</fullName>
        <ecNumber evidence="1">2.7.7.101</ecNumber>
    </recommendedName>
</protein>
<accession>A8MA86</accession>